<proteinExistence type="evidence at transcript level"/>
<dbReference type="EMBL" id="X96422">
    <property type="protein sequence ID" value="CAA65282.1"/>
    <property type="molecule type" value="mRNA"/>
</dbReference>
<dbReference type="EMBL" id="BX511161">
    <property type="protein sequence ID" value="CAM12975.1"/>
    <property type="molecule type" value="Genomic_DNA"/>
</dbReference>
<dbReference type="EMBL" id="BC058306">
    <property type="protein sequence ID" value="AAH58306.1"/>
    <property type="molecule type" value="mRNA"/>
</dbReference>
<dbReference type="EMBL" id="BC066419">
    <property type="protein sequence ID" value="AAH66419.1"/>
    <property type="molecule type" value="mRNA"/>
</dbReference>
<dbReference type="EMBL" id="BC152214">
    <property type="protein sequence ID" value="AAI52215.1"/>
    <property type="status" value="ALT_SEQ"/>
    <property type="molecule type" value="mRNA"/>
</dbReference>
<dbReference type="RefSeq" id="NP_571236.1">
    <property type="nucleotide sequence ID" value="NM_131161.1"/>
</dbReference>
<dbReference type="SMR" id="Q90482"/>
<dbReference type="FunCoup" id="Q90482">
    <property type="interactions" value="273"/>
</dbReference>
<dbReference type="STRING" id="7955.ENSDARP00000027757"/>
<dbReference type="PaxDb" id="7955-ENSDARP00000027757"/>
<dbReference type="Ensembl" id="ENSDART00000013148">
    <property type="protein sequence ID" value="ENSDARP00000027757"/>
    <property type="gene ID" value="ENSDARG00000009823"/>
</dbReference>
<dbReference type="Ensembl" id="ENSDART00000187667">
    <property type="protein sequence ID" value="ENSDARP00000146831"/>
    <property type="gene ID" value="ENSDARG00000112302"/>
</dbReference>
<dbReference type="GeneID" id="30398"/>
<dbReference type="KEGG" id="dre:30398"/>
<dbReference type="AGR" id="ZFIN:ZDB-GENE-980526-372"/>
<dbReference type="CTD" id="5453"/>
<dbReference type="ZFIN" id="ZDB-GENE-980526-372">
    <property type="gene designation" value="pou3f1"/>
</dbReference>
<dbReference type="eggNOG" id="KOG3802">
    <property type="taxonomic scope" value="Eukaryota"/>
</dbReference>
<dbReference type="HOGENOM" id="CLU_013065_1_2_1"/>
<dbReference type="InParanoid" id="Q90482"/>
<dbReference type="OMA" id="AHHGSWA"/>
<dbReference type="OrthoDB" id="6358449at2759"/>
<dbReference type="PhylomeDB" id="Q90482"/>
<dbReference type="TreeFam" id="TF316413"/>
<dbReference type="PRO" id="PR:Q90482"/>
<dbReference type="Proteomes" id="UP000000437">
    <property type="component" value="Alternate scaffold 16"/>
</dbReference>
<dbReference type="Proteomes" id="UP000000437">
    <property type="component" value="Chromosome 16"/>
</dbReference>
<dbReference type="Bgee" id="ENSDARG00000009823">
    <property type="expression patterns" value="Expressed in larva and 14 other cell types or tissues"/>
</dbReference>
<dbReference type="GO" id="GO:0005634">
    <property type="term" value="C:nucleus"/>
    <property type="evidence" value="ECO:0007669"/>
    <property type="project" value="UniProtKB-SubCell"/>
</dbReference>
<dbReference type="GO" id="GO:0000981">
    <property type="term" value="F:DNA-binding transcription factor activity, RNA polymerase II-specific"/>
    <property type="evidence" value="ECO:0000318"/>
    <property type="project" value="GO_Central"/>
</dbReference>
<dbReference type="GO" id="GO:0000978">
    <property type="term" value="F:RNA polymerase II cis-regulatory region sequence-specific DNA binding"/>
    <property type="evidence" value="ECO:0000318"/>
    <property type="project" value="GO_Central"/>
</dbReference>
<dbReference type="GO" id="GO:0007420">
    <property type="term" value="P:brain development"/>
    <property type="evidence" value="ECO:0007669"/>
    <property type="project" value="InterPro"/>
</dbReference>
<dbReference type="GO" id="GO:0030154">
    <property type="term" value="P:cell differentiation"/>
    <property type="evidence" value="ECO:0007669"/>
    <property type="project" value="UniProtKB-KW"/>
</dbReference>
<dbReference type="GO" id="GO:0006357">
    <property type="term" value="P:regulation of transcription by RNA polymerase II"/>
    <property type="evidence" value="ECO:0000318"/>
    <property type="project" value="GO_Central"/>
</dbReference>
<dbReference type="CDD" id="cd00086">
    <property type="entry name" value="homeodomain"/>
    <property type="match status" value="1"/>
</dbReference>
<dbReference type="FunFam" id="1.10.10.60:FF:000005">
    <property type="entry name" value="POU domain protein"/>
    <property type="match status" value="1"/>
</dbReference>
<dbReference type="FunFam" id="1.10.260.40:FF:000001">
    <property type="entry name" value="POU domain protein"/>
    <property type="match status" value="1"/>
</dbReference>
<dbReference type="Gene3D" id="1.10.10.60">
    <property type="entry name" value="Homeodomain-like"/>
    <property type="match status" value="1"/>
</dbReference>
<dbReference type="Gene3D" id="1.10.260.40">
    <property type="entry name" value="lambda repressor-like DNA-binding domains"/>
    <property type="match status" value="1"/>
</dbReference>
<dbReference type="InterPro" id="IPR001356">
    <property type="entry name" value="HD"/>
</dbReference>
<dbReference type="InterPro" id="IPR017970">
    <property type="entry name" value="Homeobox_CS"/>
</dbReference>
<dbReference type="InterPro" id="IPR009057">
    <property type="entry name" value="Homeodomain-like_sf"/>
</dbReference>
<dbReference type="InterPro" id="IPR010982">
    <property type="entry name" value="Lambda_DNA-bd_dom_sf"/>
</dbReference>
<dbReference type="InterPro" id="IPR013847">
    <property type="entry name" value="POU"/>
</dbReference>
<dbReference type="InterPro" id="IPR000327">
    <property type="entry name" value="POU_dom"/>
</dbReference>
<dbReference type="InterPro" id="IPR050255">
    <property type="entry name" value="POU_domain_TF"/>
</dbReference>
<dbReference type="InterPro" id="IPR016362">
    <property type="entry name" value="TF_POU_3"/>
</dbReference>
<dbReference type="PANTHER" id="PTHR11636">
    <property type="entry name" value="POU DOMAIN"/>
    <property type="match status" value="1"/>
</dbReference>
<dbReference type="PANTHER" id="PTHR11636:SF75">
    <property type="entry name" value="POU DOMAIN, CLASS 3, TRANSCRIPTION FACTOR 1"/>
    <property type="match status" value="1"/>
</dbReference>
<dbReference type="Pfam" id="PF00046">
    <property type="entry name" value="Homeodomain"/>
    <property type="match status" value="1"/>
</dbReference>
<dbReference type="Pfam" id="PF00157">
    <property type="entry name" value="Pou"/>
    <property type="match status" value="1"/>
</dbReference>
<dbReference type="PIRSF" id="PIRSF002629">
    <property type="entry name" value="Transcription_factor_POU"/>
    <property type="match status" value="1"/>
</dbReference>
<dbReference type="PRINTS" id="PR00028">
    <property type="entry name" value="POUDOMAIN"/>
</dbReference>
<dbReference type="SMART" id="SM00389">
    <property type="entry name" value="HOX"/>
    <property type="match status" value="1"/>
</dbReference>
<dbReference type="SMART" id="SM00352">
    <property type="entry name" value="POU"/>
    <property type="match status" value="1"/>
</dbReference>
<dbReference type="SUPFAM" id="SSF46689">
    <property type="entry name" value="Homeodomain-like"/>
    <property type="match status" value="1"/>
</dbReference>
<dbReference type="SUPFAM" id="SSF47413">
    <property type="entry name" value="lambda repressor-like DNA-binding domains"/>
    <property type="match status" value="1"/>
</dbReference>
<dbReference type="PROSITE" id="PS00027">
    <property type="entry name" value="HOMEOBOX_1"/>
    <property type="match status" value="1"/>
</dbReference>
<dbReference type="PROSITE" id="PS50071">
    <property type="entry name" value="HOMEOBOX_2"/>
    <property type="match status" value="1"/>
</dbReference>
<dbReference type="PROSITE" id="PS00035">
    <property type="entry name" value="POU_1"/>
    <property type="match status" value="1"/>
</dbReference>
<dbReference type="PROSITE" id="PS00465">
    <property type="entry name" value="POU_2"/>
    <property type="match status" value="1"/>
</dbReference>
<dbReference type="PROSITE" id="PS51179">
    <property type="entry name" value="POU_3"/>
    <property type="match status" value="1"/>
</dbReference>
<protein>
    <recommendedName>
        <fullName>POU domain, class 3, transcription factor 1</fullName>
    </recommendedName>
    <alternativeName>
        <fullName>POU domain protein 50</fullName>
        <shortName>ZP-50</shortName>
    </alternativeName>
</protein>
<feature type="chain" id="PRO_0000100773" description="POU domain, class 3, transcription factor 1">
    <location>
        <begin position="1"/>
        <end position="368"/>
    </location>
</feature>
<feature type="domain" description="POU-specific" evidence="2">
    <location>
        <begin position="187"/>
        <end position="261"/>
    </location>
</feature>
<feature type="DNA-binding region" description="Homeobox" evidence="1">
    <location>
        <begin position="279"/>
        <end position="338"/>
    </location>
</feature>
<feature type="region of interest" description="Disordered" evidence="3">
    <location>
        <begin position="1"/>
        <end position="28"/>
    </location>
</feature>
<feature type="region of interest" description="Disordered" evidence="3">
    <location>
        <begin position="69"/>
        <end position="88"/>
    </location>
</feature>
<feature type="region of interest" description="Disordered" evidence="3">
    <location>
        <begin position="100"/>
        <end position="134"/>
    </location>
</feature>
<feature type="region of interest" description="Disordered" evidence="3">
    <location>
        <begin position="147"/>
        <end position="193"/>
    </location>
</feature>
<feature type="compositionally biased region" description="Polar residues" evidence="3">
    <location>
        <begin position="1"/>
        <end position="16"/>
    </location>
</feature>
<feature type="compositionally biased region" description="Basic and acidic residues" evidence="3">
    <location>
        <begin position="79"/>
        <end position="88"/>
    </location>
</feature>
<feature type="compositionally biased region" description="Polar residues" evidence="3">
    <location>
        <begin position="105"/>
        <end position="134"/>
    </location>
</feature>
<feature type="compositionally biased region" description="Basic and acidic residues" evidence="3">
    <location>
        <begin position="155"/>
        <end position="170"/>
    </location>
</feature>
<feature type="sequence conflict" description="In Ref. 3; AAH66419." evidence="5" ref="3">
    <original>V</original>
    <variation>A</variation>
    <location>
        <position position="103"/>
    </location>
</feature>
<name>PO3F1_DANRE</name>
<evidence type="ECO:0000255" key="1">
    <source>
        <dbReference type="PROSITE-ProRule" id="PRU00108"/>
    </source>
</evidence>
<evidence type="ECO:0000255" key="2">
    <source>
        <dbReference type="PROSITE-ProRule" id="PRU00530"/>
    </source>
</evidence>
<evidence type="ECO:0000256" key="3">
    <source>
        <dbReference type="SAM" id="MobiDB-lite"/>
    </source>
</evidence>
<evidence type="ECO:0000269" key="4">
    <source>
    </source>
</evidence>
<evidence type="ECO:0000305" key="5"/>
<gene>
    <name type="primary">pou3f1</name>
    <name type="synonym">pou50</name>
    <name type="synonym">zp50</name>
    <name type="synonym">zp50pou</name>
    <name type="ORF">si:dkey-248g17.1</name>
</gene>
<comment type="function">
    <text evidence="4">Transcription factor that may play important roles in patterning the embryonic brain. Could directly respond to the reception of the sonic hedgehog (shh) signal.</text>
</comment>
<comment type="subcellular location">
    <subcellularLocation>
        <location>Nucleus</location>
    </subcellularLocation>
</comment>
<comment type="tissue specificity">
    <text evidence="4">Predominantly expressed in the embryonic and adult central nervous system.</text>
</comment>
<comment type="developmental stage">
    <text evidence="4">Expression starts between 10 and 12 hours post fecondation and is highest between 2 and 3 days after fertilization.</text>
</comment>
<comment type="similarity">
    <text evidence="5">Belongs to the POU transcription factor family. Class-3 subfamily.</text>
</comment>
<comment type="sequence caution" evidence="5">
    <conflict type="miscellaneous discrepancy">
        <sequence resource="EMBL-CDS" id="AAI52215"/>
    </conflict>
    <text>Contaminating sequence. Potential poly-A sequence.</text>
</comment>
<keyword id="KW-0217">Developmental protein</keyword>
<keyword id="KW-0221">Differentiation</keyword>
<keyword id="KW-0238">DNA-binding</keyword>
<keyword id="KW-0371">Homeobox</keyword>
<keyword id="KW-0524">Neurogenesis</keyword>
<keyword id="KW-0539">Nucleus</keyword>
<keyword id="KW-1185">Reference proteome</keyword>
<keyword id="KW-0804">Transcription</keyword>
<keyword id="KW-0805">Transcription regulation</keyword>
<sequence>MATTAQYIPRNNSLPSNPLMHPDSDRMHQGTTYREVQKMMHHEYLQGLATNTGHPMSLTHHQWLPTSNTDWTSGTHIGQAEHNKASVQSREDLGNGYHRSHLVHQPTQNSHHGSWAPTTTHHLSPLSPASNGHQSLVYSQTGYTMLSPQPSLHHGLRDPLHDDAGSHDNQMESPQQPFSHHQDHSDEDAPSSDDLEQFAKQFKQRRIKLGFTQADVGLALGTLYGNVFSQTTICRFEALQLSFKNMCKLKPLLNKWLEETDSNTGSPTNLDKIAAQGRKRKKRTSIEVGVKGALENHFLKCPKPSAHEITTLAGTLQLEKEVVRVWFCNRRQKEKRMTPVGVPHPTMEDVYSQAETPPLHHTLQSPVQ</sequence>
<reference key="1">
    <citation type="journal article" date="1996" name="Development">
        <title>Complex expression of the zp-50 pou gene in the embryonic zebrafish brain is altered by overexpression of sonic hedgehog.</title>
        <authorList>
            <person name="Hauptmann G."/>
            <person name="Gerster T."/>
        </authorList>
    </citation>
    <scope>NUCLEOTIDE SEQUENCE [MRNA]</scope>
    <scope>FUNCTION</scope>
    <scope>TISSUE SPECIFICITY</scope>
    <scope>DEVELOPMENTAL STAGE</scope>
    <source>
        <tissue>Neurula</tissue>
    </source>
</reference>
<reference key="2">
    <citation type="journal article" date="2013" name="Nature">
        <title>The zebrafish reference genome sequence and its relationship to the human genome.</title>
        <authorList>
            <person name="Howe K."/>
            <person name="Clark M.D."/>
            <person name="Torroja C.F."/>
            <person name="Torrance J."/>
            <person name="Berthelot C."/>
            <person name="Muffato M."/>
            <person name="Collins J.E."/>
            <person name="Humphray S."/>
            <person name="McLaren K."/>
            <person name="Matthews L."/>
            <person name="McLaren S."/>
            <person name="Sealy I."/>
            <person name="Caccamo M."/>
            <person name="Churcher C."/>
            <person name="Scott C."/>
            <person name="Barrett J.C."/>
            <person name="Koch R."/>
            <person name="Rauch G.J."/>
            <person name="White S."/>
            <person name="Chow W."/>
            <person name="Kilian B."/>
            <person name="Quintais L.T."/>
            <person name="Guerra-Assuncao J.A."/>
            <person name="Zhou Y."/>
            <person name="Gu Y."/>
            <person name="Yen J."/>
            <person name="Vogel J.H."/>
            <person name="Eyre T."/>
            <person name="Redmond S."/>
            <person name="Banerjee R."/>
            <person name="Chi J."/>
            <person name="Fu B."/>
            <person name="Langley E."/>
            <person name="Maguire S.F."/>
            <person name="Laird G.K."/>
            <person name="Lloyd D."/>
            <person name="Kenyon E."/>
            <person name="Donaldson S."/>
            <person name="Sehra H."/>
            <person name="Almeida-King J."/>
            <person name="Loveland J."/>
            <person name="Trevanion S."/>
            <person name="Jones M."/>
            <person name="Quail M."/>
            <person name="Willey D."/>
            <person name="Hunt A."/>
            <person name="Burton J."/>
            <person name="Sims S."/>
            <person name="McLay K."/>
            <person name="Plumb B."/>
            <person name="Davis J."/>
            <person name="Clee C."/>
            <person name="Oliver K."/>
            <person name="Clark R."/>
            <person name="Riddle C."/>
            <person name="Elliot D."/>
            <person name="Threadgold G."/>
            <person name="Harden G."/>
            <person name="Ware D."/>
            <person name="Begum S."/>
            <person name="Mortimore B."/>
            <person name="Kerry G."/>
            <person name="Heath P."/>
            <person name="Phillimore B."/>
            <person name="Tracey A."/>
            <person name="Corby N."/>
            <person name="Dunn M."/>
            <person name="Johnson C."/>
            <person name="Wood J."/>
            <person name="Clark S."/>
            <person name="Pelan S."/>
            <person name="Griffiths G."/>
            <person name="Smith M."/>
            <person name="Glithero R."/>
            <person name="Howden P."/>
            <person name="Barker N."/>
            <person name="Lloyd C."/>
            <person name="Stevens C."/>
            <person name="Harley J."/>
            <person name="Holt K."/>
            <person name="Panagiotidis G."/>
            <person name="Lovell J."/>
            <person name="Beasley H."/>
            <person name="Henderson C."/>
            <person name="Gordon D."/>
            <person name="Auger K."/>
            <person name="Wright D."/>
            <person name="Collins J."/>
            <person name="Raisen C."/>
            <person name="Dyer L."/>
            <person name="Leung K."/>
            <person name="Robertson L."/>
            <person name="Ambridge K."/>
            <person name="Leongamornlert D."/>
            <person name="McGuire S."/>
            <person name="Gilderthorp R."/>
            <person name="Griffiths C."/>
            <person name="Manthravadi D."/>
            <person name="Nichol S."/>
            <person name="Barker G."/>
            <person name="Whitehead S."/>
            <person name="Kay M."/>
            <person name="Brown J."/>
            <person name="Murnane C."/>
            <person name="Gray E."/>
            <person name="Humphries M."/>
            <person name="Sycamore N."/>
            <person name="Barker D."/>
            <person name="Saunders D."/>
            <person name="Wallis J."/>
            <person name="Babbage A."/>
            <person name="Hammond S."/>
            <person name="Mashreghi-Mohammadi M."/>
            <person name="Barr L."/>
            <person name="Martin S."/>
            <person name="Wray P."/>
            <person name="Ellington A."/>
            <person name="Matthews N."/>
            <person name="Ellwood M."/>
            <person name="Woodmansey R."/>
            <person name="Clark G."/>
            <person name="Cooper J."/>
            <person name="Tromans A."/>
            <person name="Grafham D."/>
            <person name="Skuce C."/>
            <person name="Pandian R."/>
            <person name="Andrews R."/>
            <person name="Harrison E."/>
            <person name="Kimberley A."/>
            <person name="Garnett J."/>
            <person name="Fosker N."/>
            <person name="Hall R."/>
            <person name="Garner P."/>
            <person name="Kelly D."/>
            <person name="Bird C."/>
            <person name="Palmer S."/>
            <person name="Gehring I."/>
            <person name="Berger A."/>
            <person name="Dooley C.M."/>
            <person name="Ersan-Urun Z."/>
            <person name="Eser C."/>
            <person name="Geiger H."/>
            <person name="Geisler M."/>
            <person name="Karotki L."/>
            <person name="Kirn A."/>
            <person name="Konantz J."/>
            <person name="Konantz M."/>
            <person name="Oberlander M."/>
            <person name="Rudolph-Geiger S."/>
            <person name="Teucke M."/>
            <person name="Lanz C."/>
            <person name="Raddatz G."/>
            <person name="Osoegawa K."/>
            <person name="Zhu B."/>
            <person name="Rapp A."/>
            <person name="Widaa S."/>
            <person name="Langford C."/>
            <person name="Yang F."/>
            <person name="Schuster S.C."/>
            <person name="Carter N.P."/>
            <person name="Harrow J."/>
            <person name="Ning Z."/>
            <person name="Herrero J."/>
            <person name="Searle S.M."/>
            <person name="Enright A."/>
            <person name="Geisler R."/>
            <person name="Plasterk R.H."/>
            <person name="Lee C."/>
            <person name="Westerfield M."/>
            <person name="de Jong P.J."/>
            <person name="Zon L.I."/>
            <person name="Postlethwait J.H."/>
            <person name="Nusslein-Volhard C."/>
            <person name="Hubbard T.J."/>
            <person name="Roest Crollius H."/>
            <person name="Rogers J."/>
            <person name="Stemple D.L."/>
        </authorList>
    </citation>
    <scope>NUCLEOTIDE SEQUENCE [LARGE SCALE GENOMIC DNA]</scope>
    <source>
        <strain>Tuebingen</strain>
    </source>
</reference>
<reference key="3">
    <citation type="submission" date="2007-08" db="EMBL/GenBank/DDBJ databases">
        <authorList>
            <consortium name="NIH - Zebrafish Gene Collection (ZGC) project"/>
        </authorList>
    </citation>
    <scope>NUCLEOTIDE SEQUENCE [LARGE SCALE MRNA]</scope>
    <source>
        <tissue>Embryo</tissue>
        <tissue>Larval eye</tissue>
    </source>
</reference>
<organism>
    <name type="scientific">Danio rerio</name>
    <name type="common">Zebrafish</name>
    <name type="synonym">Brachydanio rerio</name>
    <dbReference type="NCBI Taxonomy" id="7955"/>
    <lineage>
        <taxon>Eukaryota</taxon>
        <taxon>Metazoa</taxon>
        <taxon>Chordata</taxon>
        <taxon>Craniata</taxon>
        <taxon>Vertebrata</taxon>
        <taxon>Euteleostomi</taxon>
        <taxon>Actinopterygii</taxon>
        <taxon>Neopterygii</taxon>
        <taxon>Teleostei</taxon>
        <taxon>Ostariophysi</taxon>
        <taxon>Cypriniformes</taxon>
        <taxon>Danionidae</taxon>
        <taxon>Danioninae</taxon>
        <taxon>Danio</taxon>
    </lineage>
</organism>
<accession>Q90482</accession>
<accession>A2BGW5</accession>
<accession>A7MCK3</accession>
<accession>Q6NYY2</accession>